<organism>
    <name type="scientific">Rickettsia bellii (strain OSU 85-389)</name>
    <dbReference type="NCBI Taxonomy" id="391896"/>
    <lineage>
        <taxon>Bacteria</taxon>
        <taxon>Pseudomonadati</taxon>
        <taxon>Pseudomonadota</taxon>
        <taxon>Alphaproteobacteria</taxon>
        <taxon>Rickettsiales</taxon>
        <taxon>Rickettsiaceae</taxon>
        <taxon>Rickettsieae</taxon>
        <taxon>Rickettsia</taxon>
        <taxon>belli group</taxon>
    </lineage>
</organism>
<protein>
    <recommendedName>
        <fullName evidence="1">ATP synthase gamma chain</fullName>
    </recommendedName>
    <alternativeName>
        <fullName evidence="1">ATP synthase F1 sector gamma subunit</fullName>
    </alternativeName>
    <alternativeName>
        <fullName evidence="1">F-ATPase gamma subunit</fullName>
    </alternativeName>
</protein>
<feature type="chain" id="PRO_1000053314" description="ATP synthase gamma chain">
    <location>
        <begin position="1"/>
        <end position="288"/>
    </location>
</feature>
<comment type="function">
    <text evidence="1">Produces ATP from ADP in the presence of a proton gradient across the membrane. The gamma chain is believed to be important in regulating ATPase activity and the flow of protons through the CF(0) complex.</text>
</comment>
<comment type="subunit">
    <text evidence="1">F-type ATPases have 2 components, CF(1) - the catalytic core - and CF(0) - the membrane proton channel. CF(1) has five subunits: alpha(3), beta(3), gamma(1), delta(1), epsilon(1). CF(0) has three main subunits: a, b and c.</text>
</comment>
<comment type="subcellular location">
    <subcellularLocation>
        <location evidence="1">Cell inner membrane</location>
        <topology evidence="1">Peripheral membrane protein</topology>
    </subcellularLocation>
</comment>
<comment type="similarity">
    <text evidence="1">Belongs to the ATPase gamma chain family.</text>
</comment>
<gene>
    <name evidence="1" type="primary">atpG</name>
    <name type="ordered locus">A1I_07465</name>
</gene>
<reference key="1">
    <citation type="submission" date="2007-09" db="EMBL/GenBank/DDBJ databases">
        <title>Complete genome sequencing of Rickettsia bellii.</title>
        <authorList>
            <person name="Madan A."/>
            <person name="Lee H."/>
            <person name="Madan A."/>
            <person name="Yoon J.-G."/>
            <person name="Ryu G.-Y."/>
            <person name="Dasch G."/>
            <person name="Ereemeva M."/>
        </authorList>
    </citation>
    <scope>NUCLEOTIDE SEQUENCE [LARGE SCALE GENOMIC DNA]</scope>
    <source>
        <strain>OSU 85-389</strain>
    </source>
</reference>
<keyword id="KW-0066">ATP synthesis</keyword>
<keyword id="KW-0997">Cell inner membrane</keyword>
<keyword id="KW-1003">Cell membrane</keyword>
<keyword id="KW-0139">CF(1)</keyword>
<keyword id="KW-0375">Hydrogen ion transport</keyword>
<keyword id="KW-0406">Ion transport</keyword>
<keyword id="KW-0472">Membrane</keyword>
<keyword id="KW-0813">Transport</keyword>
<name>ATPG_RICB8</name>
<proteinExistence type="inferred from homology"/>
<accession>A8GY41</accession>
<dbReference type="EMBL" id="CP000849">
    <property type="protein sequence ID" value="ABV79791.1"/>
    <property type="molecule type" value="Genomic_DNA"/>
</dbReference>
<dbReference type="RefSeq" id="WP_012152257.1">
    <property type="nucleotide sequence ID" value="NC_009883.1"/>
</dbReference>
<dbReference type="SMR" id="A8GY41"/>
<dbReference type="KEGG" id="rbo:A1I_07465"/>
<dbReference type="HOGENOM" id="CLU_050669_0_1_5"/>
<dbReference type="GO" id="GO:0005886">
    <property type="term" value="C:plasma membrane"/>
    <property type="evidence" value="ECO:0007669"/>
    <property type="project" value="UniProtKB-SubCell"/>
</dbReference>
<dbReference type="GO" id="GO:0045259">
    <property type="term" value="C:proton-transporting ATP synthase complex"/>
    <property type="evidence" value="ECO:0007669"/>
    <property type="project" value="UniProtKB-KW"/>
</dbReference>
<dbReference type="GO" id="GO:0005524">
    <property type="term" value="F:ATP binding"/>
    <property type="evidence" value="ECO:0007669"/>
    <property type="project" value="UniProtKB-UniRule"/>
</dbReference>
<dbReference type="GO" id="GO:0046933">
    <property type="term" value="F:proton-transporting ATP synthase activity, rotational mechanism"/>
    <property type="evidence" value="ECO:0007669"/>
    <property type="project" value="UniProtKB-UniRule"/>
</dbReference>
<dbReference type="GO" id="GO:0042777">
    <property type="term" value="P:proton motive force-driven plasma membrane ATP synthesis"/>
    <property type="evidence" value="ECO:0007669"/>
    <property type="project" value="UniProtKB-UniRule"/>
</dbReference>
<dbReference type="CDD" id="cd12151">
    <property type="entry name" value="F1-ATPase_gamma"/>
    <property type="match status" value="1"/>
</dbReference>
<dbReference type="Gene3D" id="3.40.1380.10">
    <property type="match status" value="1"/>
</dbReference>
<dbReference type="Gene3D" id="1.10.287.80">
    <property type="entry name" value="ATP synthase, gamma subunit, helix hairpin domain"/>
    <property type="match status" value="1"/>
</dbReference>
<dbReference type="HAMAP" id="MF_00815">
    <property type="entry name" value="ATP_synth_gamma_bact"/>
    <property type="match status" value="1"/>
</dbReference>
<dbReference type="InterPro" id="IPR035968">
    <property type="entry name" value="ATP_synth_F1_ATPase_gsu"/>
</dbReference>
<dbReference type="InterPro" id="IPR000131">
    <property type="entry name" value="ATP_synth_F1_gsu"/>
</dbReference>
<dbReference type="NCBIfam" id="TIGR01146">
    <property type="entry name" value="ATPsyn_F1gamma"/>
    <property type="match status" value="1"/>
</dbReference>
<dbReference type="PANTHER" id="PTHR11693">
    <property type="entry name" value="ATP SYNTHASE GAMMA CHAIN"/>
    <property type="match status" value="1"/>
</dbReference>
<dbReference type="PANTHER" id="PTHR11693:SF22">
    <property type="entry name" value="ATP SYNTHASE SUBUNIT GAMMA, MITOCHONDRIAL"/>
    <property type="match status" value="1"/>
</dbReference>
<dbReference type="Pfam" id="PF00231">
    <property type="entry name" value="ATP-synt"/>
    <property type="match status" value="1"/>
</dbReference>
<dbReference type="PRINTS" id="PR00126">
    <property type="entry name" value="ATPASEGAMMA"/>
</dbReference>
<dbReference type="SUPFAM" id="SSF52943">
    <property type="entry name" value="ATP synthase (F1-ATPase), gamma subunit"/>
    <property type="match status" value="1"/>
</dbReference>
<evidence type="ECO:0000255" key="1">
    <source>
        <dbReference type="HAMAP-Rule" id="MF_00815"/>
    </source>
</evidence>
<sequence>MSNLKQLRTRIKSVKSTQKITKAMQLVSASKLTKIKNQIAHSNFYVEAISKMMSTVLSADIYDFPIEAQKFFNTETNKANLLIVMTSERGLCRTFNYMIIKQVKSDIETLKSKGEKIKLIIIGKKGYEALKKPYESYIDSYFELPKNHDENLMLQIKQKIMALVANLEVSNCTIYFNRFKNAMTQSMTKQQILPIEKYHDDSKIEEANYEYEGENLIQNLINLYVNSQINYALLQNRASEEGSRMTAMENATNNAHDIINKLVLKLNRSRQAIITMELIEIIAGSEAV</sequence>